<accession>P63326</accession>
<accession>P09900</accession>
<accession>Q9DCR5</accession>
<comment type="function">
    <text evidence="1">Component of the 40S ribosomal subunit. The ribosome is a large ribonucleoprotein complex responsible for the synthesis of proteins in the cell.</text>
</comment>
<comment type="subunit">
    <text evidence="1">Component of the small ribosomal subunit. The methylated form interacts with NPM1.</text>
</comment>
<comment type="subcellular location">
    <subcellularLocation>
        <location evidence="1">Cytoplasm</location>
    </subcellularLocation>
    <subcellularLocation>
        <location evidence="1">Nucleus</location>
        <location evidence="1">Nucleolus</location>
    </subcellularLocation>
    <text evidence="1">Localized in the granular component (GC) region of the nucleolus. Methylation is required for its localization in the GC region. Colocalizes with NPS1 in the GC region of the nucleolus.</text>
</comment>
<comment type="PTM">
    <text evidence="1">Methylated by PRMT5. Methylation is necessary for its interaction with NPS1, its localization in the granular component (GC) region of the nucleolus, for the proper assembly of ribosomes, protein synthesis and optimal cell proliferation.</text>
</comment>
<comment type="PTM">
    <text evidence="1">Monoubiquitinated by ZNF598 when a ribosome has stalled during translation of poly(A) sequences, leading to preclude synthesis of a long poly-lysine tail and initiate the ribosome quality control (RQC) pathway to degrade the potentially detrimental aberrant nascent polypeptide. Deubiquitinated by OTUD3 and USP21, antagonizing ZNF598 activity. Deubiquitinated by OTUD1, antagonizing ZNF598 activity and stimulating formation of polysomes: deubiquitination by OTUD1 promotes stability and translation of a subset mRNAs with a high abundance of rare codons can limit the translation rate. Deubiquitinated by USP10.</text>
</comment>
<comment type="similarity">
    <text evidence="4">Belongs to the eukaryotic ribosomal protein eS10 family.</text>
</comment>
<protein>
    <recommendedName>
        <fullName evidence="4">Small ribosomal subunit protein eS10</fullName>
    </recommendedName>
    <alternativeName>
        <fullName>40S ribosomal protein S10</fullName>
    </alternativeName>
</protein>
<organism>
    <name type="scientific">Rattus norvegicus</name>
    <name type="common">Rat</name>
    <dbReference type="NCBI Taxonomy" id="10116"/>
    <lineage>
        <taxon>Eukaryota</taxon>
        <taxon>Metazoa</taxon>
        <taxon>Chordata</taxon>
        <taxon>Craniata</taxon>
        <taxon>Vertebrata</taxon>
        <taxon>Euteleostomi</taxon>
        <taxon>Mammalia</taxon>
        <taxon>Eutheria</taxon>
        <taxon>Euarchontoglires</taxon>
        <taxon>Glires</taxon>
        <taxon>Rodentia</taxon>
        <taxon>Myomorpha</taxon>
        <taxon>Muroidea</taxon>
        <taxon>Muridae</taxon>
        <taxon>Murinae</taxon>
        <taxon>Rattus</taxon>
    </lineage>
</organism>
<sequence length="165" mass="18916">MLMPKKNRIAIYELLFKEGVMVAKKDVHMPKHPELADKNVPNLHVMKAMQSLKSRGYVKEQFAWRHFYWYLTNEGIQYLRDYLHLPPEIVPATLRRSRPETGRPRPKGPEGERPARFTRGEADRDTYRRSAVPPGADKKAEAGAGSATEFQFRGGFGRGRGQPPQ</sequence>
<dbReference type="EMBL" id="X13549">
    <property type="protein sequence ID" value="CAA31901.1"/>
    <property type="molecule type" value="mRNA"/>
</dbReference>
<dbReference type="EMBL" id="BC058141">
    <property type="protein sequence ID" value="AAH58141.1"/>
    <property type="molecule type" value="mRNA"/>
</dbReference>
<dbReference type="PIR" id="S01881">
    <property type="entry name" value="R3RT10"/>
</dbReference>
<dbReference type="RefSeq" id="NP_112371.1">
    <property type="nucleotide sequence ID" value="NM_031109.2"/>
</dbReference>
<dbReference type="RefSeq" id="XP_002729669.1">
    <property type="nucleotide sequence ID" value="XM_002729623.2"/>
</dbReference>
<dbReference type="RefSeq" id="XP_003754221.1">
    <property type="nucleotide sequence ID" value="XM_003754173.2"/>
</dbReference>
<dbReference type="PDB" id="7QGG">
    <property type="method" value="EM"/>
    <property type="resolution" value="2.86 A"/>
    <property type="chains" value="SK=1-165"/>
</dbReference>
<dbReference type="PDBsum" id="7QGG"/>
<dbReference type="EMDB" id="EMD-13954"/>
<dbReference type="SMR" id="P63326"/>
<dbReference type="BioGRID" id="249645">
    <property type="interactions" value="5"/>
</dbReference>
<dbReference type="FunCoup" id="P63326">
    <property type="interactions" value="2663"/>
</dbReference>
<dbReference type="IntAct" id="P63326">
    <property type="interactions" value="3"/>
</dbReference>
<dbReference type="MINT" id="P63326"/>
<dbReference type="STRING" id="10116.ENSRNOP00000043693"/>
<dbReference type="iPTMnet" id="P63326"/>
<dbReference type="PhosphoSitePlus" id="P63326"/>
<dbReference type="jPOST" id="P63326"/>
<dbReference type="PaxDb" id="10116-ENSRNOP00000043693"/>
<dbReference type="Ensembl" id="ENSRNOT00000043250.6">
    <property type="protein sequence ID" value="ENSRNOP00000043693.4"/>
    <property type="gene ID" value="ENSRNOG00000066637.1"/>
</dbReference>
<dbReference type="Ensembl" id="ENSRNOT00000107117.1">
    <property type="protein sequence ID" value="ENSRNOP00000077780.1"/>
    <property type="gene ID" value="ENSRNOG00000000490.8"/>
</dbReference>
<dbReference type="GeneID" id="81773"/>
<dbReference type="KEGG" id="rno:81773"/>
<dbReference type="UCSC" id="RGD:621024">
    <property type="organism name" value="rat"/>
</dbReference>
<dbReference type="AGR" id="RGD:2323006"/>
<dbReference type="AGR" id="RGD:621024"/>
<dbReference type="CTD" id="6204"/>
<dbReference type="RGD" id="621024">
    <property type="gene designation" value="Rps10"/>
</dbReference>
<dbReference type="eggNOG" id="KOG3344">
    <property type="taxonomic scope" value="Eukaryota"/>
</dbReference>
<dbReference type="GeneTree" id="ENSGT00440000034918"/>
<dbReference type="HOGENOM" id="CLU_089349_3_1_1"/>
<dbReference type="InParanoid" id="P63326"/>
<dbReference type="OMA" id="ERTKIHR"/>
<dbReference type="OrthoDB" id="5211809at2759"/>
<dbReference type="PhylomeDB" id="P63326"/>
<dbReference type="TreeFam" id="TF319100"/>
<dbReference type="Reactome" id="R-RNO-156827">
    <property type="pathway name" value="L13a-mediated translational silencing of Ceruloplasmin expression"/>
</dbReference>
<dbReference type="Reactome" id="R-RNO-1799339">
    <property type="pathway name" value="SRP-dependent cotranslational protein targeting to membrane"/>
</dbReference>
<dbReference type="Reactome" id="R-RNO-6791226">
    <property type="pathway name" value="Major pathway of rRNA processing in the nucleolus and cytosol"/>
</dbReference>
<dbReference type="Reactome" id="R-RNO-72649">
    <property type="pathway name" value="Translation initiation complex formation"/>
</dbReference>
<dbReference type="Reactome" id="R-RNO-72689">
    <property type="pathway name" value="Formation of a pool of free 40S subunits"/>
</dbReference>
<dbReference type="Reactome" id="R-RNO-72695">
    <property type="pathway name" value="Formation of the ternary complex, and subsequently, the 43S complex"/>
</dbReference>
<dbReference type="Reactome" id="R-RNO-72702">
    <property type="pathway name" value="Ribosomal scanning and start codon recognition"/>
</dbReference>
<dbReference type="Reactome" id="R-RNO-72706">
    <property type="pathway name" value="GTP hydrolysis and joining of the 60S ribosomal subunit"/>
</dbReference>
<dbReference type="Reactome" id="R-RNO-975956">
    <property type="pathway name" value="Nonsense Mediated Decay (NMD) independent of the Exon Junction Complex (EJC)"/>
</dbReference>
<dbReference type="Reactome" id="R-RNO-975957">
    <property type="pathway name" value="Nonsense Mediated Decay (NMD) enhanced by the Exon Junction Complex (EJC)"/>
</dbReference>
<dbReference type="PRO" id="PR:P63326"/>
<dbReference type="Proteomes" id="UP000002494">
    <property type="component" value="Chromosome 20"/>
</dbReference>
<dbReference type="Proteomes" id="UP000002494">
    <property type="component" value="Chromosome 6"/>
</dbReference>
<dbReference type="Bgee" id="ENSRNOG00000052141">
    <property type="expression patterns" value="Expressed in thymus and 19 other cell types or tissues"/>
</dbReference>
<dbReference type="GO" id="GO:0022626">
    <property type="term" value="C:cytosolic ribosome"/>
    <property type="evidence" value="ECO:0000266"/>
    <property type="project" value="RGD"/>
</dbReference>
<dbReference type="GO" id="GO:0022627">
    <property type="term" value="C:cytosolic small ribosomal subunit"/>
    <property type="evidence" value="ECO:0000314"/>
    <property type="project" value="RGD"/>
</dbReference>
<dbReference type="GO" id="GO:0005730">
    <property type="term" value="C:nucleolus"/>
    <property type="evidence" value="ECO:0000250"/>
    <property type="project" value="UniProtKB"/>
</dbReference>
<dbReference type="GO" id="GO:0045202">
    <property type="term" value="C:synapse"/>
    <property type="evidence" value="ECO:0000266"/>
    <property type="project" value="RGD"/>
</dbReference>
<dbReference type="GO" id="GO:0003723">
    <property type="term" value="F:RNA binding"/>
    <property type="evidence" value="ECO:0000318"/>
    <property type="project" value="GO_Central"/>
</dbReference>
<dbReference type="GO" id="GO:0003735">
    <property type="term" value="F:structural constituent of ribosome"/>
    <property type="evidence" value="ECO:0000315"/>
    <property type="project" value="RGD"/>
</dbReference>
<dbReference type="GO" id="GO:0000049">
    <property type="term" value="F:tRNA binding"/>
    <property type="evidence" value="ECO:0000314"/>
    <property type="project" value="RGD"/>
</dbReference>
<dbReference type="GO" id="GO:0000028">
    <property type="term" value="P:ribosomal small subunit assembly"/>
    <property type="evidence" value="ECO:0000315"/>
    <property type="project" value="RGD"/>
</dbReference>
<dbReference type="FunFam" id="1.10.10.10:FF:001335">
    <property type="entry name" value="40S ribosomal protein S10"/>
    <property type="match status" value="1"/>
</dbReference>
<dbReference type="Gene3D" id="1.10.10.10">
    <property type="entry name" value="Winged helix-like DNA-binding domain superfamily/Winged helix DNA-binding domain"/>
    <property type="match status" value="1"/>
</dbReference>
<dbReference type="InterPro" id="IPR005326">
    <property type="entry name" value="Plectin_eS10_N"/>
</dbReference>
<dbReference type="InterPro" id="IPR037447">
    <property type="entry name" value="Ribosomal_eS10"/>
</dbReference>
<dbReference type="InterPro" id="IPR036388">
    <property type="entry name" value="WH-like_DNA-bd_sf"/>
</dbReference>
<dbReference type="PANTHER" id="PTHR12146">
    <property type="entry name" value="40S RIBOSOMAL PROTEIN S10"/>
    <property type="match status" value="1"/>
</dbReference>
<dbReference type="PANTHER" id="PTHR12146:SF10">
    <property type="entry name" value="SMALL RIBOSOMAL SUBUNIT PROTEIN ES10"/>
    <property type="match status" value="1"/>
</dbReference>
<dbReference type="Pfam" id="PF03501">
    <property type="entry name" value="S10_plectin"/>
    <property type="match status" value="1"/>
</dbReference>
<keyword id="KW-0002">3D-structure</keyword>
<keyword id="KW-0963">Cytoplasm</keyword>
<keyword id="KW-1017">Isopeptide bond</keyword>
<keyword id="KW-0488">Methylation</keyword>
<keyword id="KW-0539">Nucleus</keyword>
<keyword id="KW-0597">Phosphoprotein</keyword>
<keyword id="KW-1185">Reference proteome</keyword>
<keyword id="KW-0687">Ribonucleoprotein</keyword>
<keyword id="KW-0689">Ribosomal protein</keyword>
<keyword id="KW-0832">Ubl conjugation</keyword>
<reference key="1">
    <citation type="journal article" date="1989" name="Eur. J. Biochem.">
        <title>The primary structure of rat ribosomal protein S10.</title>
        <authorList>
            <person name="Glueck A."/>
            <person name="Chan Y.-L."/>
            <person name="Lin A."/>
            <person name="Wool I.G."/>
        </authorList>
    </citation>
    <scope>NUCLEOTIDE SEQUENCE [MRNA]</scope>
    <source>
        <strain>Sprague-Dawley</strain>
        <tissue>Liver</tissue>
    </source>
</reference>
<reference key="2">
    <citation type="journal article" date="2004" name="Genome Res.">
        <title>The status, quality, and expansion of the NIH full-length cDNA project: the Mammalian Gene Collection (MGC).</title>
        <authorList>
            <consortium name="The MGC Project Team"/>
        </authorList>
    </citation>
    <scope>NUCLEOTIDE SEQUENCE [LARGE SCALE MRNA]</scope>
    <source>
        <tissue>Pituitary</tissue>
    </source>
</reference>
<gene>
    <name type="primary">Rps10</name>
</gene>
<feature type="chain" id="PRO_0000116362" description="Small ribosomal subunit protein eS10">
    <location>
        <begin position="1"/>
        <end position="165"/>
    </location>
</feature>
<feature type="region of interest" description="Disordered" evidence="3">
    <location>
        <begin position="90"/>
        <end position="165"/>
    </location>
</feature>
<feature type="compositionally biased region" description="Basic and acidic residues" evidence="3">
    <location>
        <begin position="97"/>
        <end position="128"/>
    </location>
</feature>
<feature type="compositionally biased region" description="Gly residues" evidence="3">
    <location>
        <begin position="154"/>
        <end position="165"/>
    </location>
</feature>
<feature type="modified residue" description="Phosphotyrosine" evidence="2">
    <location>
        <position position="12"/>
    </location>
</feature>
<feature type="modified residue" description="Phosphoserine" evidence="2">
    <location>
        <position position="146"/>
    </location>
</feature>
<feature type="modified residue" description="Omega-N-methylarginine" evidence="2">
    <location>
        <position position="153"/>
    </location>
</feature>
<feature type="modified residue" description="Symmetric dimethylarginine" evidence="1">
    <location>
        <position position="158"/>
    </location>
</feature>
<feature type="modified residue" description="Symmetric dimethylarginine" evidence="1">
    <location>
        <position position="160"/>
    </location>
</feature>
<feature type="cross-link" description="Glycyl lysine isopeptide (Lys-Gly) (interchain with G-Cter in ubiquitin)" evidence="1">
    <location>
        <position position="138"/>
    </location>
</feature>
<feature type="cross-link" description="Glycyl lysine isopeptide (Lys-Gly) (interchain with G-Cter in ubiquitin)" evidence="1">
    <location>
        <position position="139"/>
    </location>
</feature>
<name>RS10_RAT</name>
<evidence type="ECO:0000250" key="1">
    <source>
        <dbReference type="UniProtKB" id="P46783"/>
    </source>
</evidence>
<evidence type="ECO:0000250" key="2">
    <source>
        <dbReference type="UniProtKB" id="P63325"/>
    </source>
</evidence>
<evidence type="ECO:0000256" key="3">
    <source>
        <dbReference type="SAM" id="MobiDB-lite"/>
    </source>
</evidence>
<evidence type="ECO:0000305" key="4"/>
<proteinExistence type="evidence at protein level"/>